<proteinExistence type="inferred from homology"/>
<protein>
    <recommendedName>
        <fullName evidence="1">Type III pantothenate kinase</fullName>
        <ecNumber evidence="1">2.7.1.33</ecNumber>
    </recommendedName>
    <alternativeName>
        <fullName evidence="1">PanK-III</fullName>
    </alternativeName>
    <alternativeName>
        <fullName evidence="1">Pantothenic acid kinase</fullName>
    </alternativeName>
</protein>
<name>COAX_SACD2</name>
<keyword id="KW-0067">ATP-binding</keyword>
<keyword id="KW-0173">Coenzyme A biosynthesis</keyword>
<keyword id="KW-0963">Cytoplasm</keyword>
<keyword id="KW-0418">Kinase</keyword>
<keyword id="KW-0547">Nucleotide-binding</keyword>
<keyword id="KW-0630">Potassium</keyword>
<keyword id="KW-1185">Reference proteome</keyword>
<keyword id="KW-0808">Transferase</keyword>
<reference key="1">
    <citation type="journal article" date="2008" name="PLoS Genet.">
        <title>Complete genome sequence of the complex carbohydrate-degrading marine bacterium, Saccharophagus degradans strain 2-40 T.</title>
        <authorList>
            <person name="Weiner R.M."/>
            <person name="Taylor L.E. II"/>
            <person name="Henrissat B."/>
            <person name="Hauser L."/>
            <person name="Land M."/>
            <person name="Coutinho P.M."/>
            <person name="Rancurel C."/>
            <person name="Saunders E.H."/>
            <person name="Longmire A.G."/>
            <person name="Zhang H."/>
            <person name="Bayer E.A."/>
            <person name="Gilbert H.J."/>
            <person name="Larimer F."/>
            <person name="Zhulin I.B."/>
            <person name="Ekborg N.A."/>
            <person name="Lamed R."/>
            <person name="Richardson P.M."/>
            <person name="Borovok I."/>
            <person name="Hutcheson S."/>
        </authorList>
    </citation>
    <scope>NUCLEOTIDE SEQUENCE [LARGE SCALE GENOMIC DNA]</scope>
    <source>
        <strain>2-40 / ATCC 43961 / DSM 17024</strain>
    </source>
</reference>
<gene>
    <name evidence="1" type="primary">coaX</name>
    <name type="ordered locus">Sde_0916</name>
</gene>
<accession>Q21MA1</accession>
<sequence length="260" mass="27419">MKLYVDAGNTRTKWRLADGREGVVASDDISGMERSFALLAGVVTGVFVCSVLGEAFNRRLEALCGQLFGVPPHFARVKQGVLDIVPAYERLDTLGVDRWLGLVFARSHAKSQCSVVVGAGSALTVDLLDAQACHLGGWIAPGCASVEAALGGKVQFARSEAYLKALQSDGALTPPQTSAFGSSTVACVQAGVDAMIRGFLQQVIACAGTEFGGREAVYFLAGGDSPRVEAMLRELDPNLELVLSPAIVLDALVLWSEWCA</sequence>
<comment type="function">
    <text evidence="1">Catalyzes the phosphorylation of pantothenate (Pan), the first step in CoA biosynthesis.</text>
</comment>
<comment type="catalytic activity">
    <reaction evidence="1">
        <text>(R)-pantothenate + ATP = (R)-4'-phosphopantothenate + ADP + H(+)</text>
        <dbReference type="Rhea" id="RHEA:16373"/>
        <dbReference type="ChEBI" id="CHEBI:10986"/>
        <dbReference type="ChEBI" id="CHEBI:15378"/>
        <dbReference type="ChEBI" id="CHEBI:29032"/>
        <dbReference type="ChEBI" id="CHEBI:30616"/>
        <dbReference type="ChEBI" id="CHEBI:456216"/>
        <dbReference type="EC" id="2.7.1.33"/>
    </reaction>
</comment>
<comment type="cofactor">
    <cofactor evidence="1">
        <name>NH4(+)</name>
        <dbReference type="ChEBI" id="CHEBI:28938"/>
    </cofactor>
    <cofactor evidence="1">
        <name>K(+)</name>
        <dbReference type="ChEBI" id="CHEBI:29103"/>
    </cofactor>
    <text evidence="1">A monovalent cation. Ammonium or potassium.</text>
</comment>
<comment type="pathway">
    <text evidence="1">Cofactor biosynthesis; coenzyme A biosynthesis; CoA from (R)-pantothenate: step 1/5.</text>
</comment>
<comment type="subunit">
    <text evidence="1">Homodimer.</text>
</comment>
<comment type="subcellular location">
    <subcellularLocation>
        <location evidence="1">Cytoplasm</location>
    </subcellularLocation>
</comment>
<comment type="similarity">
    <text evidence="1">Belongs to the type III pantothenate kinase family.</text>
</comment>
<dbReference type="EC" id="2.7.1.33" evidence="1"/>
<dbReference type="EMBL" id="CP000282">
    <property type="protein sequence ID" value="ABD80178.1"/>
    <property type="molecule type" value="Genomic_DNA"/>
</dbReference>
<dbReference type="RefSeq" id="WP_011467399.1">
    <property type="nucleotide sequence ID" value="NC_007912.1"/>
</dbReference>
<dbReference type="SMR" id="Q21MA1"/>
<dbReference type="STRING" id="203122.Sde_0916"/>
<dbReference type="GeneID" id="98612597"/>
<dbReference type="KEGG" id="sde:Sde_0916"/>
<dbReference type="eggNOG" id="COG1521">
    <property type="taxonomic scope" value="Bacteria"/>
</dbReference>
<dbReference type="HOGENOM" id="CLU_066627_0_0_6"/>
<dbReference type="OrthoDB" id="9781305at2"/>
<dbReference type="UniPathway" id="UPA00241">
    <property type="reaction ID" value="UER00352"/>
</dbReference>
<dbReference type="Proteomes" id="UP000001947">
    <property type="component" value="Chromosome"/>
</dbReference>
<dbReference type="GO" id="GO:0005737">
    <property type="term" value="C:cytoplasm"/>
    <property type="evidence" value="ECO:0007669"/>
    <property type="project" value="UniProtKB-SubCell"/>
</dbReference>
<dbReference type="GO" id="GO:0005524">
    <property type="term" value="F:ATP binding"/>
    <property type="evidence" value="ECO:0007669"/>
    <property type="project" value="UniProtKB-UniRule"/>
</dbReference>
<dbReference type="GO" id="GO:0004594">
    <property type="term" value="F:pantothenate kinase activity"/>
    <property type="evidence" value="ECO:0007669"/>
    <property type="project" value="UniProtKB-UniRule"/>
</dbReference>
<dbReference type="GO" id="GO:0015937">
    <property type="term" value="P:coenzyme A biosynthetic process"/>
    <property type="evidence" value="ECO:0007669"/>
    <property type="project" value="UniProtKB-UniRule"/>
</dbReference>
<dbReference type="CDD" id="cd24015">
    <property type="entry name" value="ASKHA_NBD_PanK-III"/>
    <property type="match status" value="1"/>
</dbReference>
<dbReference type="Gene3D" id="3.30.420.40">
    <property type="match status" value="2"/>
</dbReference>
<dbReference type="HAMAP" id="MF_01274">
    <property type="entry name" value="Pantothen_kinase_3"/>
    <property type="match status" value="1"/>
</dbReference>
<dbReference type="InterPro" id="IPR043129">
    <property type="entry name" value="ATPase_NBD"/>
</dbReference>
<dbReference type="InterPro" id="IPR004619">
    <property type="entry name" value="Type_III_PanK"/>
</dbReference>
<dbReference type="NCBIfam" id="TIGR00671">
    <property type="entry name" value="baf"/>
    <property type="match status" value="1"/>
</dbReference>
<dbReference type="PANTHER" id="PTHR34265">
    <property type="entry name" value="TYPE III PANTOTHENATE KINASE"/>
    <property type="match status" value="1"/>
</dbReference>
<dbReference type="PANTHER" id="PTHR34265:SF1">
    <property type="entry name" value="TYPE III PANTOTHENATE KINASE"/>
    <property type="match status" value="1"/>
</dbReference>
<dbReference type="Pfam" id="PF03309">
    <property type="entry name" value="Pan_kinase"/>
    <property type="match status" value="1"/>
</dbReference>
<dbReference type="SUPFAM" id="SSF53067">
    <property type="entry name" value="Actin-like ATPase domain"/>
    <property type="match status" value="2"/>
</dbReference>
<organism>
    <name type="scientific">Saccharophagus degradans (strain 2-40 / ATCC 43961 / DSM 17024)</name>
    <dbReference type="NCBI Taxonomy" id="203122"/>
    <lineage>
        <taxon>Bacteria</taxon>
        <taxon>Pseudomonadati</taxon>
        <taxon>Pseudomonadota</taxon>
        <taxon>Gammaproteobacteria</taxon>
        <taxon>Cellvibrionales</taxon>
        <taxon>Cellvibrionaceae</taxon>
        <taxon>Saccharophagus</taxon>
    </lineage>
</organism>
<feature type="chain" id="PRO_0000270899" description="Type III pantothenate kinase">
    <location>
        <begin position="1"/>
        <end position="260"/>
    </location>
</feature>
<feature type="active site" description="Proton acceptor" evidence="1">
    <location>
        <position position="97"/>
    </location>
</feature>
<feature type="binding site" evidence="1">
    <location>
        <begin position="6"/>
        <end position="13"/>
    </location>
    <ligand>
        <name>ATP</name>
        <dbReference type="ChEBI" id="CHEBI:30616"/>
    </ligand>
</feature>
<feature type="binding site" evidence="1">
    <location>
        <position position="88"/>
    </location>
    <ligand>
        <name>substrate</name>
    </ligand>
</feature>
<feature type="binding site" evidence="1">
    <location>
        <begin position="95"/>
        <end position="98"/>
    </location>
    <ligand>
        <name>substrate</name>
    </ligand>
</feature>
<feature type="binding site" evidence="1">
    <location>
        <position position="121"/>
    </location>
    <ligand>
        <name>ATP</name>
        <dbReference type="ChEBI" id="CHEBI:30616"/>
    </ligand>
</feature>
<feature type="binding site" evidence="1">
    <location>
        <position position="184"/>
    </location>
    <ligand>
        <name>substrate</name>
    </ligand>
</feature>
<evidence type="ECO:0000255" key="1">
    <source>
        <dbReference type="HAMAP-Rule" id="MF_01274"/>
    </source>
</evidence>